<keyword id="KW-0378">Hydrolase</keyword>
<keyword id="KW-0540">Nuclease</keyword>
<keyword id="KW-0614">Plasmid</keyword>
<keyword id="KW-0843">Virulence</keyword>
<proteinExistence type="inferred from homology"/>
<comment type="function">
    <text evidence="1">Cleaves ssRNA, mostly between U:A.</text>
</comment>
<comment type="subunit">
    <text evidence="1">Homodimer.</text>
</comment>
<comment type="similarity">
    <text evidence="2">Belongs to the VapD ribonuclease family.</text>
</comment>
<name>VAPD1_RIEAN</name>
<reference key="1">
    <citation type="journal article" date="1998" name="Avian Pathol.">
        <title>Molecular characterization of a plasmid isolated from Riemerella anatipestifer.</title>
        <authorList>
            <person name="Chang C.-F."/>
            <person name="Hung P.-E."/>
            <person name="Chang Y.-F."/>
        </authorList>
    </citation>
    <scope>NUCLEOTIDE SEQUENCE [GENOMIC DNA]</scope>
    <source>
        <strain>10</strain>
    </source>
</reference>
<dbReference type="EC" id="3.1.-.-"/>
<dbReference type="EMBL" id="AF048718">
    <property type="protein sequence ID" value="AAC27554.1"/>
    <property type="molecule type" value="Genomic_DNA"/>
</dbReference>
<dbReference type="RefSeq" id="NP_052296.1">
    <property type="nucleotide sequence ID" value="NC_002111.1"/>
</dbReference>
<dbReference type="SMR" id="O85172"/>
<dbReference type="GO" id="GO:0004518">
    <property type="term" value="F:nuclease activity"/>
    <property type="evidence" value="ECO:0007669"/>
    <property type="project" value="UniProtKB-KW"/>
</dbReference>
<dbReference type="GO" id="GO:0003723">
    <property type="term" value="F:RNA binding"/>
    <property type="evidence" value="ECO:0007669"/>
    <property type="project" value="InterPro"/>
</dbReference>
<dbReference type="Gene3D" id="3.30.70.240">
    <property type="match status" value="1"/>
</dbReference>
<dbReference type="InterPro" id="IPR016368">
    <property type="entry name" value="VapD"/>
</dbReference>
<dbReference type="InterPro" id="IPR019199">
    <property type="entry name" value="Virulence_VapD/CRISPR_Cas2"/>
</dbReference>
<dbReference type="Pfam" id="PF09827">
    <property type="entry name" value="CRISPR_Cas2"/>
    <property type="match status" value="1"/>
</dbReference>
<dbReference type="PIRSF" id="PIRSF002882">
    <property type="entry name" value="VapD"/>
    <property type="match status" value="1"/>
</dbReference>
<feature type="chain" id="PRO_0000217275" description="Endoribonuclease VapD 1">
    <location>
        <begin position="1"/>
        <end position="89"/>
    </location>
</feature>
<geneLocation type="plasmid">
    <name>pCFC1</name>
</geneLocation>
<protein>
    <recommendedName>
        <fullName>Endoribonuclease VapD 1</fullName>
        <ecNumber>3.1.-.-</ecNumber>
    </recommendedName>
    <alternativeName>
        <fullName>Virulence-associated protein 1</fullName>
    </alternativeName>
</protein>
<accession>O85172</accession>
<evidence type="ECO:0000250" key="1"/>
<evidence type="ECO:0000305" key="2"/>
<sequence length="89" mass="10492">MVISDLEKYYGKPYNNAYYEISNILQEFGFFRTQGSVYLNNNSDMANLMEAIQTLSEVEWFANSVRDIRGFRVEDWSNFTKLVKRKATN</sequence>
<organism>
    <name type="scientific">Riemerella anatipestifer</name>
    <name type="common">Moraxella anatipestifer</name>
    <dbReference type="NCBI Taxonomy" id="34085"/>
    <lineage>
        <taxon>Bacteria</taxon>
        <taxon>Pseudomonadati</taxon>
        <taxon>Bacteroidota</taxon>
        <taxon>Flavobacteriia</taxon>
        <taxon>Flavobacteriales</taxon>
        <taxon>Weeksellaceae</taxon>
        <taxon>Riemerella</taxon>
    </lineage>
</organism>